<dbReference type="EC" id="7.1.1.-" evidence="1"/>
<dbReference type="EMBL" id="CP001197">
    <property type="protein sequence ID" value="ACL08542.1"/>
    <property type="molecule type" value="Genomic_DNA"/>
</dbReference>
<dbReference type="SMR" id="B8DS03"/>
<dbReference type="STRING" id="883.DvMF_1594"/>
<dbReference type="KEGG" id="dvm:DvMF_1594"/>
<dbReference type="eggNOG" id="COG0377">
    <property type="taxonomic scope" value="Bacteria"/>
</dbReference>
<dbReference type="HOGENOM" id="CLU_055737_7_3_7"/>
<dbReference type="OrthoDB" id="9786737at2"/>
<dbReference type="GO" id="GO:0005886">
    <property type="term" value="C:plasma membrane"/>
    <property type="evidence" value="ECO:0007669"/>
    <property type="project" value="UniProtKB-SubCell"/>
</dbReference>
<dbReference type="GO" id="GO:0045271">
    <property type="term" value="C:respiratory chain complex I"/>
    <property type="evidence" value="ECO:0007669"/>
    <property type="project" value="TreeGrafter"/>
</dbReference>
<dbReference type="GO" id="GO:0051539">
    <property type="term" value="F:4 iron, 4 sulfur cluster binding"/>
    <property type="evidence" value="ECO:0007669"/>
    <property type="project" value="UniProtKB-KW"/>
</dbReference>
<dbReference type="GO" id="GO:0005506">
    <property type="term" value="F:iron ion binding"/>
    <property type="evidence" value="ECO:0007669"/>
    <property type="project" value="UniProtKB-UniRule"/>
</dbReference>
<dbReference type="GO" id="GO:0008137">
    <property type="term" value="F:NADH dehydrogenase (ubiquinone) activity"/>
    <property type="evidence" value="ECO:0007669"/>
    <property type="project" value="InterPro"/>
</dbReference>
<dbReference type="GO" id="GO:0050136">
    <property type="term" value="F:NADH:ubiquinone reductase (non-electrogenic) activity"/>
    <property type="evidence" value="ECO:0007669"/>
    <property type="project" value="UniProtKB-UniRule"/>
</dbReference>
<dbReference type="GO" id="GO:0048038">
    <property type="term" value="F:quinone binding"/>
    <property type="evidence" value="ECO:0007669"/>
    <property type="project" value="UniProtKB-KW"/>
</dbReference>
<dbReference type="GO" id="GO:0009060">
    <property type="term" value="P:aerobic respiration"/>
    <property type="evidence" value="ECO:0007669"/>
    <property type="project" value="TreeGrafter"/>
</dbReference>
<dbReference type="GO" id="GO:0015990">
    <property type="term" value="P:electron transport coupled proton transport"/>
    <property type="evidence" value="ECO:0007669"/>
    <property type="project" value="TreeGrafter"/>
</dbReference>
<dbReference type="FunFam" id="3.40.50.12280:FF:000002">
    <property type="entry name" value="NADH-quinone oxidoreductase subunit B"/>
    <property type="match status" value="1"/>
</dbReference>
<dbReference type="Gene3D" id="3.40.50.12280">
    <property type="match status" value="1"/>
</dbReference>
<dbReference type="HAMAP" id="MF_01356">
    <property type="entry name" value="NDH1_NuoB"/>
    <property type="match status" value="1"/>
</dbReference>
<dbReference type="InterPro" id="IPR006137">
    <property type="entry name" value="NADH_UbQ_OxRdtase-like_20kDa"/>
</dbReference>
<dbReference type="InterPro" id="IPR006138">
    <property type="entry name" value="NADH_UQ_OxRdtase_20Kd_su"/>
</dbReference>
<dbReference type="NCBIfam" id="TIGR01957">
    <property type="entry name" value="nuoB_fam"/>
    <property type="match status" value="1"/>
</dbReference>
<dbReference type="NCBIfam" id="NF005012">
    <property type="entry name" value="PRK06411.1"/>
    <property type="match status" value="1"/>
</dbReference>
<dbReference type="PANTHER" id="PTHR11995">
    <property type="entry name" value="NADH DEHYDROGENASE"/>
    <property type="match status" value="1"/>
</dbReference>
<dbReference type="PANTHER" id="PTHR11995:SF33">
    <property type="entry name" value="NADH-QUINONE OXIDOREDUCTASE SUBUNIT B 2"/>
    <property type="match status" value="1"/>
</dbReference>
<dbReference type="Pfam" id="PF01058">
    <property type="entry name" value="Oxidored_q6"/>
    <property type="match status" value="1"/>
</dbReference>
<dbReference type="SUPFAM" id="SSF56770">
    <property type="entry name" value="HydA/Nqo6-like"/>
    <property type="match status" value="1"/>
</dbReference>
<proteinExistence type="inferred from homology"/>
<feature type="chain" id="PRO_0000376199" description="NADH-quinone oxidoreductase subunit B">
    <location>
        <begin position="1"/>
        <end position="187"/>
    </location>
</feature>
<feature type="binding site" evidence="1">
    <location>
        <position position="51"/>
    </location>
    <ligand>
        <name>[4Fe-4S] cluster</name>
        <dbReference type="ChEBI" id="CHEBI:49883"/>
    </ligand>
</feature>
<feature type="binding site" evidence="1">
    <location>
        <position position="52"/>
    </location>
    <ligand>
        <name>[4Fe-4S] cluster</name>
        <dbReference type="ChEBI" id="CHEBI:49883"/>
    </ligand>
</feature>
<feature type="binding site" evidence="1">
    <location>
        <position position="117"/>
    </location>
    <ligand>
        <name>[4Fe-4S] cluster</name>
        <dbReference type="ChEBI" id="CHEBI:49883"/>
    </ligand>
</feature>
<feature type="binding site" evidence="1">
    <location>
        <position position="149"/>
    </location>
    <ligand>
        <name>[4Fe-4S] cluster</name>
        <dbReference type="ChEBI" id="CHEBI:49883"/>
    </ligand>
</feature>
<accession>B8DS03</accession>
<reference key="1">
    <citation type="submission" date="2008-10" db="EMBL/GenBank/DDBJ databases">
        <title>Complete sequence of Desulfovibrio vulgaris str. 'Miyazaki F'.</title>
        <authorList>
            <person name="Lucas S."/>
            <person name="Copeland A."/>
            <person name="Lapidus A."/>
            <person name="Glavina del Rio T."/>
            <person name="Dalin E."/>
            <person name="Tice H."/>
            <person name="Bruce D."/>
            <person name="Goodwin L."/>
            <person name="Pitluck S."/>
            <person name="Sims D."/>
            <person name="Brettin T."/>
            <person name="Detter J.C."/>
            <person name="Han C."/>
            <person name="Larimer F."/>
            <person name="Land M."/>
            <person name="Hauser L."/>
            <person name="Kyrpides N."/>
            <person name="Mikhailova N."/>
            <person name="Hazen T.C."/>
            <person name="Richardson P."/>
        </authorList>
    </citation>
    <scope>NUCLEOTIDE SEQUENCE [LARGE SCALE GENOMIC DNA]</scope>
    <source>
        <strain>DSM 19637 / Miyazaki F</strain>
    </source>
</reference>
<name>NUOB_NITV9</name>
<keyword id="KW-0004">4Fe-4S</keyword>
<keyword id="KW-0997">Cell inner membrane</keyword>
<keyword id="KW-1003">Cell membrane</keyword>
<keyword id="KW-0408">Iron</keyword>
<keyword id="KW-0411">Iron-sulfur</keyword>
<keyword id="KW-0472">Membrane</keyword>
<keyword id="KW-0479">Metal-binding</keyword>
<keyword id="KW-0520">NAD</keyword>
<keyword id="KW-0874">Quinone</keyword>
<keyword id="KW-1278">Translocase</keyword>
<keyword id="KW-0813">Transport</keyword>
<keyword id="KW-0830">Ubiquinone</keyword>
<organism>
    <name type="scientific">Nitratidesulfovibrio vulgaris (strain DSM 19637 / Miyazaki F)</name>
    <name type="common">Desulfovibrio vulgaris</name>
    <dbReference type="NCBI Taxonomy" id="883"/>
    <lineage>
        <taxon>Bacteria</taxon>
        <taxon>Pseudomonadati</taxon>
        <taxon>Thermodesulfobacteriota</taxon>
        <taxon>Desulfovibrionia</taxon>
        <taxon>Desulfovibrionales</taxon>
        <taxon>Desulfovibrionaceae</taxon>
        <taxon>Nitratidesulfovibrio</taxon>
    </lineage>
</organism>
<comment type="function">
    <text evidence="1">NDH-1 shuttles electrons from NADH, via FMN and iron-sulfur (Fe-S) centers, to quinones in the respiratory chain. The immediate electron acceptor for the enzyme in this species is believed to be ubiquinone. Couples the redox reaction to proton translocation (for every two electrons transferred, four hydrogen ions are translocated across the cytoplasmic membrane), and thus conserves the redox energy in a proton gradient.</text>
</comment>
<comment type="catalytic activity">
    <reaction evidence="1">
        <text>a quinone + NADH + 5 H(+)(in) = a quinol + NAD(+) + 4 H(+)(out)</text>
        <dbReference type="Rhea" id="RHEA:57888"/>
        <dbReference type="ChEBI" id="CHEBI:15378"/>
        <dbReference type="ChEBI" id="CHEBI:24646"/>
        <dbReference type="ChEBI" id="CHEBI:57540"/>
        <dbReference type="ChEBI" id="CHEBI:57945"/>
        <dbReference type="ChEBI" id="CHEBI:132124"/>
    </reaction>
</comment>
<comment type="cofactor">
    <cofactor evidence="1">
        <name>[4Fe-4S] cluster</name>
        <dbReference type="ChEBI" id="CHEBI:49883"/>
    </cofactor>
    <text evidence="1">Binds 1 [4Fe-4S] cluster.</text>
</comment>
<comment type="subunit">
    <text evidence="1">NDH-1 is composed of 14 different subunits. Subunits NuoB, C, D, E, F, and G constitute the peripheral sector of the complex.</text>
</comment>
<comment type="subcellular location">
    <subcellularLocation>
        <location evidence="1">Cell inner membrane</location>
        <topology evidence="1">Peripheral membrane protein</topology>
        <orientation evidence="1">Cytoplasmic side</orientation>
    </subcellularLocation>
</comment>
<comment type="similarity">
    <text evidence="1">Belongs to the complex I 20 kDa subunit family.</text>
</comment>
<evidence type="ECO:0000255" key="1">
    <source>
        <dbReference type="HAMAP-Rule" id="MF_01356"/>
    </source>
</evidence>
<gene>
    <name evidence="1" type="primary">nuoB</name>
    <name type="ordered locus">DvMF_1594</name>
</gene>
<protein>
    <recommendedName>
        <fullName evidence="1">NADH-quinone oxidoreductase subunit B</fullName>
        <ecNumber evidence="1">7.1.1.-</ecNumber>
    </recommendedName>
    <alternativeName>
        <fullName evidence="1">NADH dehydrogenase I subunit B</fullName>
    </alternativeName>
    <alternativeName>
        <fullName evidence="1">NDH-1 subunit B</fullName>
    </alternativeName>
</protein>
<sequence length="187" mass="20030">MAAQDCPVRPPVIAPATGGVDAPIVNVAPVQKILDVCRAMSLWPMTFGLACCAIEMMAVGMARFDISRFGAEVFRPSPRQSDLMIVAGTVTRKMAPALVRLYEQMPAPRYVMALGNCAISGGPFNFEGQYAIVEGVDNLVPVDVYVPGCPPRPEALLEGLFQIQHKITGRRWWPVPAEISGSMGGGA</sequence>